<organism>
    <name type="scientific">Danio rerio</name>
    <name type="common">Zebrafish</name>
    <name type="synonym">Brachydanio rerio</name>
    <dbReference type="NCBI Taxonomy" id="7955"/>
    <lineage>
        <taxon>Eukaryota</taxon>
        <taxon>Metazoa</taxon>
        <taxon>Chordata</taxon>
        <taxon>Craniata</taxon>
        <taxon>Vertebrata</taxon>
        <taxon>Euteleostomi</taxon>
        <taxon>Actinopterygii</taxon>
        <taxon>Neopterygii</taxon>
        <taxon>Teleostei</taxon>
        <taxon>Ostariophysi</taxon>
        <taxon>Cypriniformes</taxon>
        <taxon>Danionidae</taxon>
        <taxon>Danioninae</taxon>
        <taxon>Danio</taxon>
    </lineage>
</organism>
<keyword id="KW-0217">Developmental protein</keyword>
<keyword id="KW-0238">DNA-binding</keyword>
<keyword id="KW-0371">Homeobox</keyword>
<keyword id="KW-0539">Nucleus</keyword>
<keyword id="KW-1185">Reference proteome</keyword>
<keyword id="KW-0804">Transcription</keyword>
<keyword id="KW-0805">Transcription regulation</keyword>
<comment type="function">
    <text evidence="1">Sequence-specific transcription factor which is part of a developmental regulatory system that provides cells with specific positional identities on the anterior-posterior axis.</text>
</comment>
<comment type="subcellular location">
    <subcellularLocation>
        <location>Nucleus</location>
    </subcellularLocation>
</comment>
<comment type="developmental stage">
    <text evidence="3">First expressed at 15 hours post-fertilization (hpf) in the presumptive proctodeum. At 22 hpf, expressed in the most distal part of the hindgut, the future rectum and the cloacal region; cloacal expression is still detectable until 64 hpf. First detected in the dorsal pre-somitic mesoderm and neural keel at 17 hpf. At 22-26 hpf, expression is restricted to the posterior tip of the trunk, begins to weaken and is undetectable by 40-56 hpf.</text>
</comment>
<comment type="similarity">
    <text evidence="4">Belongs to the Abd-B homeobox family.</text>
</comment>
<feature type="chain" id="PRO_0000200247" description="Homeobox protein Hox-D13a">
    <location>
        <begin position="1"/>
        <end position="256"/>
    </location>
</feature>
<feature type="DNA-binding region" description="Homeobox" evidence="2">
    <location>
        <begin position="191"/>
        <end position="250"/>
    </location>
</feature>
<feature type="sequence conflict" description="In Ref. 1; CAA61031." evidence="4" ref="1">
    <original>P</original>
    <variation>A</variation>
    <location>
        <position position="15"/>
    </location>
</feature>
<feature type="sequence conflict" description="In Ref. 1; CAA61031." evidence="4" ref="1">
    <original>I</original>
    <variation>V</variation>
    <location>
        <position position="46"/>
    </location>
</feature>
<feature type="sequence conflict" description="In Ref. 1; CAA61031." evidence="4" ref="1">
    <original>R</original>
    <variation>G</variation>
    <location>
        <position position="115"/>
    </location>
</feature>
<feature type="sequence conflict" description="In Ref. 1; CAA61031." evidence="4" ref="1">
    <original>L</original>
    <variation>R</variation>
    <location>
        <position position="137"/>
    </location>
</feature>
<feature type="sequence conflict" description="In Ref. 1; CAA61031." evidence="4" ref="1">
    <original>F</original>
    <variation>S</variation>
    <location>
        <position position="164"/>
    </location>
</feature>
<sequence length="256" mass="29113">MDGGGLDEEFINVYPSAFGTHSSRCTSGAPVLSAVDRPTSVCNESISPYFSFPSNIGSGSFTFGCHLENSYKVPQNAVFPPGVAKQNGQFANKPVDHGEASSWLKEFAFYQGCARSYPRIPAFIDLPVVQRAMMGDLRHETCLTMEGHQHWDWSNNCSSQLYCFQDQTRSPHIWKPSLTEEAAAASFCQRGRKKRVPYTKFQLKELEREYNTTKFITKENRRRIASSTNLSERQVTIWFQNRRVKDKKRPDVCIKC</sequence>
<dbReference type="EMBL" id="X87752">
    <property type="protein sequence ID" value="CAA61031.1"/>
    <property type="molecule type" value="Genomic_DNA"/>
</dbReference>
<dbReference type="EMBL" id="BC091996">
    <property type="protein sequence ID" value="AAH91996.1"/>
    <property type="molecule type" value="mRNA"/>
</dbReference>
<dbReference type="RefSeq" id="NP_571244.2">
    <property type="nucleotide sequence ID" value="NM_131169.3"/>
</dbReference>
<dbReference type="SMR" id="Q90472"/>
<dbReference type="STRING" id="7955.ENSDARP00000076768"/>
<dbReference type="PaxDb" id="7955-ENSDARP00000076768"/>
<dbReference type="Ensembl" id="ENSDART00000082332">
    <property type="protein sequence ID" value="ENSDARP00000076768"/>
    <property type="gene ID" value="ENSDARG00000059256"/>
</dbReference>
<dbReference type="GeneID" id="30407"/>
<dbReference type="KEGG" id="dre:30407"/>
<dbReference type="AGR" id="ZFIN:ZDB-GENE-990415-119"/>
<dbReference type="CTD" id="30407"/>
<dbReference type="ZFIN" id="ZDB-GENE-990415-119">
    <property type="gene designation" value="hoxd13a"/>
</dbReference>
<dbReference type="eggNOG" id="KOG0487">
    <property type="taxonomic scope" value="Eukaryota"/>
</dbReference>
<dbReference type="HOGENOM" id="CLU_059940_2_0_1"/>
<dbReference type="InParanoid" id="Q90472"/>
<dbReference type="OMA" id="AVMNQPD"/>
<dbReference type="OrthoDB" id="6159439at2759"/>
<dbReference type="PhylomeDB" id="Q90472"/>
<dbReference type="TreeFam" id="TF330813"/>
<dbReference type="PRO" id="PR:Q90472"/>
<dbReference type="Proteomes" id="UP000000437">
    <property type="component" value="Chromosome 9"/>
</dbReference>
<dbReference type="Bgee" id="ENSDARG00000059256">
    <property type="expression patterns" value="Expressed in mesenchyme pectoral fin and 12 other cell types or tissues"/>
</dbReference>
<dbReference type="GO" id="GO:0005634">
    <property type="term" value="C:nucleus"/>
    <property type="evidence" value="ECO:0007669"/>
    <property type="project" value="UniProtKB-SubCell"/>
</dbReference>
<dbReference type="GO" id="GO:0000981">
    <property type="term" value="F:DNA-binding transcription factor activity, RNA polymerase II-specific"/>
    <property type="evidence" value="ECO:0000318"/>
    <property type="project" value="GO_Central"/>
</dbReference>
<dbReference type="GO" id="GO:0000978">
    <property type="term" value="F:RNA polymerase II cis-regulatory region sequence-specific DNA binding"/>
    <property type="evidence" value="ECO:0000318"/>
    <property type="project" value="GO_Central"/>
</dbReference>
<dbReference type="GO" id="GO:0006357">
    <property type="term" value="P:regulation of transcription by RNA polymerase II"/>
    <property type="evidence" value="ECO:0000318"/>
    <property type="project" value="GO_Central"/>
</dbReference>
<dbReference type="CDD" id="cd00086">
    <property type="entry name" value="homeodomain"/>
    <property type="match status" value="1"/>
</dbReference>
<dbReference type="FunFam" id="1.10.10.60:FF:000084">
    <property type="entry name" value="Homeobox protein Hox-D13"/>
    <property type="match status" value="1"/>
</dbReference>
<dbReference type="Gene3D" id="1.10.10.60">
    <property type="entry name" value="Homeodomain-like"/>
    <property type="match status" value="1"/>
</dbReference>
<dbReference type="InterPro" id="IPR051003">
    <property type="entry name" value="AP_axis_regulatory_Homeobox"/>
</dbReference>
<dbReference type="InterPro" id="IPR001356">
    <property type="entry name" value="HD"/>
</dbReference>
<dbReference type="InterPro" id="IPR017970">
    <property type="entry name" value="Homeobox_CS"/>
</dbReference>
<dbReference type="InterPro" id="IPR009057">
    <property type="entry name" value="Homeodomain-like_sf"/>
</dbReference>
<dbReference type="PANTHER" id="PTHR45804:SF3">
    <property type="entry name" value="HOMEOBOX PROTEIN HOX-A13"/>
    <property type="match status" value="1"/>
</dbReference>
<dbReference type="PANTHER" id="PTHR45804">
    <property type="entry name" value="SEGMENTATION PROTEIN FUSHI TARAZU-LIKE PROTEIN"/>
    <property type="match status" value="1"/>
</dbReference>
<dbReference type="Pfam" id="PF00046">
    <property type="entry name" value="Homeodomain"/>
    <property type="match status" value="1"/>
</dbReference>
<dbReference type="SMART" id="SM00389">
    <property type="entry name" value="HOX"/>
    <property type="match status" value="1"/>
</dbReference>
<dbReference type="SUPFAM" id="SSF46689">
    <property type="entry name" value="Homeodomain-like"/>
    <property type="match status" value="1"/>
</dbReference>
<dbReference type="PROSITE" id="PS00027">
    <property type="entry name" value="HOMEOBOX_1"/>
    <property type="match status" value="1"/>
</dbReference>
<dbReference type="PROSITE" id="PS50071">
    <property type="entry name" value="HOMEOBOX_2"/>
    <property type="match status" value="1"/>
</dbReference>
<evidence type="ECO:0000250" key="1"/>
<evidence type="ECO:0000255" key="2">
    <source>
        <dbReference type="PROSITE-ProRule" id="PRU00108"/>
    </source>
</evidence>
<evidence type="ECO:0000269" key="3">
    <source>
    </source>
</evidence>
<evidence type="ECO:0000305" key="4"/>
<gene>
    <name type="primary">hoxd13a</name>
    <name type="synonym">hoxd-13</name>
    <name type="synonym">hoxd13</name>
    <name type="ORF">zgc:110511</name>
</gene>
<reference key="1">
    <citation type="journal article" date="1996" name="Mech. Dev.">
        <title>Teleost HoxD and HoxA genes: comparison with tetrapods and functional evolution of the HOXD complex.</title>
        <authorList>
            <person name="van der Hoeven F."/>
            <person name="Sordino P."/>
            <person name="Fraudeau N."/>
            <person name="Izpisua-Belmonte J.-C."/>
            <person name="Duboule D."/>
        </authorList>
    </citation>
    <scope>NUCLEOTIDE SEQUENCE [GENOMIC DNA]</scope>
    <scope>DEVELOPMENTAL STAGE</scope>
</reference>
<reference key="2">
    <citation type="submission" date="2005-03" db="EMBL/GenBank/DDBJ databases">
        <authorList>
            <consortium name="NIH - Zebrafish Gene Collection (ZGC) project"/>
        </authorList>
    </citation>
    <scope>NUCLEOTIDE SEQUENCE [LARGE SCALE MRNA]</scope>
    <source>
        <tissue>Embryo</tissue>
    </source>
</reference>
<accession>Q90472</accession>
<accession>Q58EB3</accession>
<name>HXDDA_DANRE</name>
<protein>
    <recommendedName>
        <fullName>Homeobox protein Hox-D13a</fullName>
        <shortName>Hox-D13</shortName>
    </recommendedName>
</protein>
<proteinExistence type="evidence at transcript level"/>